<protein>
    <recommendedName>
        <fullName evidence="1">Urease accessory protein UreD</fullName>
    </recommendedName>
</protein>
<comment type="function">
    <text evidence="1">Required for maturation of urease via the functional incorporation of the urease nickel metallocenter.</text>
</comment>
<comment type="subunit">
    <text evidence="1">UreD, UreF and UreG form a complex that acts as a GTP-hydrolysis-dependent molecular chaperone, activating the urease apoprotein by helping to assemble the nickel containing metallocenter of UreC. The UreE protein probably delivers the nickel.</text>
</comment>
<comment type="subcellular location">
    <subcellularLocation>
        <location evidence="1">Cytoplasm</location>
    </subcellularLocation>
</comment>
<comment type="similarity">
    <text evidence="1">Belongs to the UreD family.</text>
</comment>
<organism>
    <name type="scientific">Bordetella pertussis (strain Tohama I / ATCC BAA-589 / NCTC 13251)</name>
    <dbReference type="NCBI Taxonomy" id="257313"/>
    <lineage>
        <taxon>Bacteria</taxon>
        <taxon>Pseudomonadati</taxon>
        <taxon>Pseudomonadota</taxon>
        <taxon>Betaproteobacteria</taxon>
        <taxon>Burkholderiales</taxon>
        <taxon>Alcaligenaceae</taxon>
        <taxon>Bordetella</taxon>
    </lineage>
</organism>
<dbReference type="EMBL" id="BX640420">
    <property type="protein sequence ID" value="CAE43440.1"/>
    <property type="molecule type" value="Genomic_DNA"/>
</dbReference>
<dbReference type="RefSeq" id="NP_881734.1">
    <property type="nucleotide sequence ID" value="NC_002929.2"/>
</dbReference>
<dbReference type="RefSeq" id="WP_003814832.1">
    <property type="nucleotide sequence ID" value="NZ_CP039022.1"/>
</dbReference>
<dbReference type="SMR" id="P0A4R4"/>
<dbReference type="STRING" id="257313.BP3172"/>
<dbReference type="PaxDb" id="257313-BP3172"/>
<dbReference type="KEGG" id="bpe:BP3172"/>
<dbReference type="PATRIC" id="fig|257313.5.peg.3429"/>
<dbReference type="eggNOG" id="COG0829">
    <property type="taxonomic scope" value="Bacteria"/>
</dbReference>
<dbReference type="HOGENOM" id="CLU_056339_0_0_4"/>
<dbReference type="Proteomes" id="UP000002676">
    <property type="component" value="Chromosome"/>
</dbReference>
<dbReference type="GO" id="GO:0005737">
    <property type="term" value="C:cytoplasm"/>
    <property type="evidence" value="ECO:0007669"/>
    <property type="project" value="UniProtKB-SubCell"/>
</dbReference>
<dbReference type="GO" id="GO:0016151">
    <property type="term" value="F:nickel cation binding"/>
    <property type="evidence" value="ECO:0007669"/>
    <property type="project" value="UniProtKB-UniRule"/>
</dbReference>
<dbReference type="HAMAP" id="MF_01384">
    <property type="entry name" value="UreD"/>
    <property type="match status" value="1"/>
</dbReference>
<dbReference type="InterPro" id="IPR002669">
    <property type="entry name" value="UreD"/>
</dbReference>
<dbReference type="PANTHER" id="PTHR33643">
    <property type="entry name" value="UREASE ACCESSORY PROTEIN D"/>
    <property type="match status" value="1"/>
</dbReference>
<dbReference type="PANTHER" id="PTHR33643:SF1">
    <property type="entry name" value="UREASE ACCESSORY PROTEIN D"/>
    <property type="match status" value="1"/>
</dbReference>
<dbReference type="Pfam" id="PF01774">
    <property type="entry name" value="UreD"/>
    <property type="match status" value="1"/>
</dbReference>
<keyword id="KW-0143">Chaperone</keyword>
<keyword id="KW-0963">Cytoplasm</keyword>
<keyword id="KW-0996">Nickel insertion</keyword>
<keyword id="KW-1185">Reference proteome</keyword>
<reference key="1">
    <citation type="journal article" date="2003" name="Nat. Genet.">
        <title>Comparative analysis of the genome sequences of Bordetella pertussis, Bordetella parapertussis and Bordetella bronchiseptica.</title>
        <authorList>
            <person name="Parkhill J."/>
            <person name="Sebaihia M."/>
            <person name="Preston A."/>
            <person name="Murphy L.D."/>
            <person name="Thomson N.R."/>
            <person name="Harris D.E."/>
            <person name="Holden M.T.G."/>
            <person name="Churcher C.M."/>
            <person name="Bentley S.D."/>
            <person name="Mungall K.L."/>
            <person name="Cerdeno-Tarraga A.-M."/>
            <person name="Temple L."/>
            <person name="James K.D."/>
            <person name="Harris B."/>
            <person name="Quail M.A."/>
            <person name="Achtman M."/>
            <person name="Atkin R."/>
            <person name="Baker S."/>
            <person name="Basham D."/>
            <person name="Bason N."/>
            <person name="Cherevach I."/>
            <person name="Chillingworth T."/>
            <person name="Collins M."/>
            <person name="Cronin A."/>
            <person name="Davis P."/>
            <person name="Doggett J."/>
            <person name="Feltwell T."/>
            <person name="Goble A."/>
            <person name="Hamlin N."/>
            <person name="Hauser H."/>
            <person name="Holroyd S."/>
            <person name="Jagels K."/>
            <person name="Leather S."/>
            <person name="Moule S."/>
            <person name="Norberczak H."/>
            <person name="O'Neil S."/>
            <person name="Ormond D."/>
            <person name="Price C."/>
            <person name="Rabbinowitsch E."/>
            <person name="Rutter S."/>
            <person name="Sanders M."/>
            <person name="Saunders D."/>
            <person name="Seeger K."/>
            <person name="Sharp S."/>
            <person name="Simmonds M."/>
            <person name="Skelton J."/>
            <person name="Squares R."/>
            <person name="Squares S."/>
            <person name="Stevens K."/>
            <person name="Unwin L."/>
            <person name="Whitehead S."/>
            <person name="Barrell B.G."/>
            <person name="Maskell D.J."/>
        </authorList>
    </citation>
    <scope>NUCLEOTIDE SEQUENCE [LARGE SCALE GENOMIC DNA]</scope>
    <source>
        <strain>Tohama I / ATCC BAA-589 / NCTC 13251</strain>
    </source>
</reference>
<gene>
    <name evidence="1" type="primary">ureD</name>
    <name type="ordered locus">BP3172</name>
</gene>
<name>URED_BORPE</name>
<proteinExistence type="inferred from homology"/>
<accession>P0A4R4</accession>
<accession>O06704</accession>
<evidence type="ECO:0000255" key="1">
    <source>
        <dbReference type="HAMAP-Rule" id="MF_01384"/>
    </source>
</evidence>
<sequence>MSETLDQWRAGLTLGFAPGHAGRTVLRERAHYGPMLVQRALYPEGPQVCHVAILHPPSGIAGGDALEIRVDVAGGARAALTTPGATRWYKSNGRQASQDVHLRVAAGGRLDWLPLESIFFEEADALARNRIQLESGAAAIGWDLIQLGRVNQSGHWSQGRLHTATELYVDGRLLWVDQGLVGAQDDVRRQVSGLAGFPVHAALWSFGPRLDAEQNEELAGLMPWSDTLRGAATTMPYDATQSLCLVRCLGVHMEDVRAVMTDAWAYLRPRVLDTPAVVPRLWAT</sequence>
<feature type="chain" id="PRO_0000067609" description="Urease accessory protein UreD">
    <location>
        <begin position="1"/>
        <end position="284"/>
    </location>
</feature>